<name>RL22_ECOSE</name>
<dbReference type="EMBL" id="AP009240">
    <property type="protein sequence ID" value="BAG79114.1"/>
    <property type="molecule type" value="Genomic_DNA"/>
</dbReference>
<dbReference type="RefSeq" id="WP_000447529.1">
    <property type="nucleotide sequence ID" value="NC_011415.1"/>
</dbReference>
<dbReference type="SMR" id="B6I229"/>
<dbReference type="GeneID" id="93778672"/>
<dbReference type="KEGG" id="ecy:ECSE_3590"/>
<dbReference type="HOGENOM" id="CLU_083987_3_3_6"/>
<dbReference type="Proteomes" id="UP000008199">
    <property type="component" value="Chromosome"/>
</dbReference>
<dbReference type="GO" id="GO:0022625">
    <property type="term" value="C:cytosolic large ribosomal subunit"/>
    <property type="evidence" value="ECO:0007669"/>
    <property type="project" value="TreeGrafter"/>
</dbReference>
<dbReference type="GO" id="GO:0019843">
    <property type="term" value="F:rRNA binding"/>
    <property type="evidence" value="ECO:0007669"/>
    <property type="project" value="UniProtKB-UniRule"/>
</dbReference>
<dbReference type="GO" id="GO:0003735">
    <property type="term" value="F:structural constituent of ribosome"/>
    <property type="evidence" value="ECO:0007669"/>
    <property type="project" value="InterPro"/>
</dbReference>
<dbReference type="GO" id="GO:0006412">
    <property type="term" value="P:translation"/>
    <property type="evidence" value="ECO:0007669"/>
    <property type="project" value="UniProtKB-UniRule"/>
</dbReference>
<dbReference type="CDD" id="cd00336">
    <property type="entry name" value="Ribosomal_L22"/>
    <property type="match status" value="1"/>
</dbReference>
<dbReference type="FunFam" id="3.90.470.10:FF:000001">
    <property type="entry name" value="50S ribosomal protein L22"/>
    <property type="match status" value="1"/>
</dbReference>
<dbReference type="Gene3D" id="3.90.470.10">
    <property type="entry name" value="Ribosomal protein L22/L17"/>
    <property type="match status" value="1"/>
</dbReference>
<dbReference type="HAMAP" id="MF_01331_B">
    <property type="entry name" value="Ribosomal_uL22_B"/>
    <property type="match status" value="1"/>
</dbReference>
<dbReference type="InterPro" id="IPR001063">
    <property type="entry name" value="Ribosomal_uL22"/>
</dbReference>
<dbReference type="InterPro" id="IPR005727">
    <property type="entry name" value="Ribosomal_uL22_bac/chlpt-type"/>
</dbReference>
<dbReference type="InterPro" id="IPR047867">
    <property type="entry name" value="Ribosomal_uL22_bac/org-type"/>
</dbReference>
<dbReference type="InterPro" id="IPR018260">
    <property type="entry name" value="Ribosomal_uL22_CS"/>
</dbReference>
<dbReference type="InterPro" id="IPR036394">
    <property type="entry name" value="Ribosomal_uL22_sf"/>
</dbReference>
<dbReference type="NCBIfam" id="TIGR01044">
    <property type="entry name" value="rplV_bact"/>
    <property type="match status" value="1"/>
</dbReference>
<dbReference type="PANTHER" id="PTHR13501">
    <property type="entry name" value="CHLOROPLAST 50S RIBOSOMAL PROTEIN L22-RELATED"/>
    <property type="match status" value="1"/>
</dbReference>
<dbReference type="PANTHER" id="PTHR13501:SF8">
    <property type="entry name" value="LARGE RIBOSOMAL SUBUNIT PROTEIN UL22M"/>
    <property type="match status" value="1"/>
</dbReference>
<dbReference type="Pfam" id="PF00237">
    <property type="entry name" value="Ribosomal_L22"/>
    <property type="match status" value="1"/>
</dbReference>
<dbReference type="SUPFAM" id="SSF54843">
    <property type="entry name" value="Ribosomal protein L22"/>
    <property type="match status" value="1"/>
</dbReference>
<dbReference type="PROSITE" id="PS00464">
    <property type="entry name" value="RIBOSOMAL_L22"/>
    <property type="match status" value="1"/>
</dbReference>
<feature type="chain" id="PRO_1000142260" description="Large ribosomal subunit protein uL22">
    <location>
        <begin position="1"/>
        <end position="110"/>
    </location>
</feature>
<evidence type="ECO:0000255" key="1">
    <source>
        <dbReference type="HAMAP-Rule" id="MF_01331"/>
    </source>
</evidence>
<evidence type="ECO:0000305" key="2"/>
<keyword id="KW-0687">Ribonucleoprotein</keyword>
<keyword id="KW-0689">Ribosomal protein</keyword>
<keyword id="KW-0694">RNA-binding</keyword>
<keyword id="KW-0699">rRNA-binding</keyword>
<gene>
    <name evidence="1" type="primary">rplV</name>
    <name type="ordered locus">ECSE_3590</name>
</gene>
<organism>
    <name type="scientific">Escherichia coli (strain SE11)</name>
    <dbReference type="NCBI Taxonomy" id="409438"/>
    <lineage>
        <taxon>Bacteria</taxon>
        <taxon>Pseudomonadati</taxon>
        <taxon>Pseudomonadota</taxon>
        <taxon>Gammaproteobacteria</taxon>
        <taxon>Enterobacterales</taxon>
        <taxon>Enterobacteriaceae</taxon>
        <taxon>Escherichia</taxon>
    </lineage>
</organism>
<proteinExistence type="inferred from homology"/>
<reference key="1">
    <citation type="journal article" date="2008" name="DNA Res.">
        <title>Complete genome sequence and comparative analysis of the wild-type commensal Escherichia coli strain SE11 isolated from a healthy adult.</title>
        <authorList>
            <person name="Oshima K."/>
            <person name="Toh H."/>
            <person name="Ogura Y."/>
            <person name="Sasamoto H."/>
            <person name="Morita H."/>
            <person name="Park S.-H."/>
            <person name="Ooka T."/>
            <person name="Iyoda S."/>
            <person name="Taylor T.D."/>
            <person name="Hayashi T."/>
            <person name="Itoh K."/>
            <person name="Hattori M."/>
        </authorList>
    </citation>
    <scope>NUCLEOTIDE SEQUENCE [LARGE SCALE GENOMIC DNA]</scope>
    <source>
        <strain>SE11</strain>
    </source>
</reference>
<sequence>METIAKHRHARSSAQKVRLVADLIRGKKVSQALDILTYTNKKAAVLVKKVLESAIANAEHNDGADIDDLKVTKIFVDEGPSMKRIMPRAKGRADRILKRTSHITVVVSDR</sequence>
<protein>
    <recommendedName>
        <fullName evidence="1">Large ribosomal subunit protein uL22</fullName>
    </recommendedName>
    <alternativeName>
        <fullName evidence="2">50S ribosomal protein L22</fullName>
    </alternativeName>
</protein>
<accession>B6I229</accession>
<comment type="function">
    <text evidence="1">This protein binds specifically to 23S rRNA; its binding is stimulated by other ribosomal proteins, e.g. L4, L17, and L20. It is important during the early stages of 50S assembly. It makes multiple contacts with different domains of the 23S rRNA in the assembled 50S subunit and ribosome (By similarity).</text>
</comment>
<comment type="function">
    <text evidence="1">The globular domain of the protein is located near the polypeptide exit tunnel on the outside of the subunit, while an extended beta-hairpin is found that lines the wall of the exit tunnel in the center of the 70S ribosome.</text>
</comment>
<comment type="subunit">
    <text evidence="1">Part of the 50S ribosomal subunit.</text>
</comment>
<comment type="similarity">
    <text evidence="1">Belongs to the universal ribosomal protein uL22 family.</text>
</comment>